<organism>
    <name type="scientific">Brucella abortus (strain S19)</name>
    <dbReference type="NCBI Taxonomy" id="430066"/>
    <lineage>
        <taxon>Bacteria</taxon>
        <taxon>Pseudomonadati</taxon>
        <taxon>Pseudomonadota</taxon>
        <taxon>Alphaproteobacteria</taxon>
        <taxon>Hyphomicrobiales</taxon>
        <taxon>Brucellaceae</taxon>
        <taxon>Brucella/Ochrobactrum group</taxon>
        <taxon>Brucella</taxon>
    </lineage>
</organism>
<gene>
    <name evidence="1" type="primary">fbp</name>
    <name type="ordered locus">BAbS19_II03420</name>
</gene>
<name>F16PA_BRUA1</name>
<proteinExistence type="inferred from homology"/>
<dbReference type="EC" id="3.1.3.11" evidence="1"/>
<dbReference type="EMBL" id="CP000888">
    <property type="protein sequence ID" value="ACD73851.1"/>
    <property type="molecule type" value="Genomic_DNA"/>
</dbReference>
<dbReference type="RefSeq" id="WP_002965774.1">
    <property type="nucleotide sequence ID" value="NC_010740.1"/>
</dbReference>
<dbReference type="SMR" id="B2SAG4"/>
<dbReference type="KEGG" id="bmc:BAbS19_II03420"/>
<dbReference type="HOGENOM" id="CLU_039977_0_0_5"/>
<dbReference type="UniPathway" id="UPA00138"/>
<dbReference type="Proteomes" id="UP000002565">
    <property type="component" value="Chromosome 2"/>
</dbReference>
<dbReference type="GO" id="GO:0005829">
    <property type="term" value="C:cytosol"/>
    <property type="evidence" value="ECO:0007669"/>
    <property type="project" value="TreeGrafter"/>
</dbReference>
<dbReference type="GO" id="GO:0042132">
    <property type="term" value="F:fructose 1,6-bisphosphate 1-phosphatase activity"/>
    <property type="evidence" value="ECO:0007669"/>
    <property type="project" value="UniProtKB-UniRule"/>
</dbReference>
<dbReference type="GO" id="GO:0000287">
    <property type="term" value="F:magnesium ion binding"/>
    <property type="evidence" value="ECO:0007669"/>
    <property type="project" value="UniProtKB-UniRule"/>
</dbReference>
<dbReference type="GO" id="GO:0030388">
    <property type="term" value="P:fructose 1,6-bisphosphate metabolic process"/>
    <property type="evidence" value="ECO:0007669"/>
    <property type="project" value="TreeGrafter"/>
</dbReference>
<dbReference type="GO" id="GO:0006002">
    <property type="term" value="P:fructose 6-phosphate metabolic process"/>
    <property type="evidence" value="ECO:0007669"/>
    <property type="project" value="TreeGrafter"/>
</dbReference>
<dbReference type="GO" id="GO:0006000">
    <property type="term" value="P:fructose metabolic process"/>
    <property type="evidence" value="ECO:0007669"/>
    <property type="project" value="TreeGrafter"/>
</dbReference>
<dbReference type="GO" id="GO:0006094">
    <property type="term" value="P:gluconeogenesis"/>
    <property type="evidence" value="ECO:0007669"/>
    <property type="project" value="UniProtKB-UniRule"/>
</dbReference>
<dbReference type="GO" id="GO:0005986">
    <property type="term" value="P:sucrose biosynthetic process"/>
    <property type="evidence" value="ECO:0007669"/>
    <property type="project" value="TreeGrafter"/>
</dbReference>
<dbReference type="CDD" id="cd00354">
    <property type="entry name" value="FBPase"/>
    <property type="match status" value="1"/>
</dbReference>
<dbReference type="Gene3D" id="3.40.190.80">
    <property type="match status" value="1"/>
</dbReference>
<dbReference type="Gene3D" id="3.30.540.10">
    <property type="entry name" value="Fructose-1,6-Bisphosphatase, subunit A, domain 1"/>
    <property type="match status" value="1"/>
</dbReference>
<dbReference type="HAMAP" id="MF_01855">
    <property type="entry name" value="FBPase_class1"/>
    <property type="match status" value="1"/>
</dbReference>
<dbReference type="InterPro" id="IPR044015">
    <property type="entry name" value="FBPase_C_dom"/>
</dbReference>
<dbReference type="InterPro" id="IPR000146">
    <property type="entry name" value="FBPase_class-1"/>
</dbReference>
<dbReference type="InterPro" id="IPR033391">
    <property type="entry name" value="FBPase_N"/>
</dbReference>
<dbReference type="InterPro" id="IPR028343">
    <property type="entry name" value="FBPtase"/>
</dbReference>
<dbReference type="InterPro" id="IPR020548">
    <property type="entry name" value="Fructose_bisphosphatase_AS"/>
</dbReference>
<dbReference type="NCBIfam" id="NF006780">
    <property type="entry name" value="PRK09293.1-4"/>
    <property type="match status" value="1"/>
</dbReference>
<dbReference type="PANTHER" id="PTHR11556">
    <property type="entry name" value="FRUCTOSE-1,6-BISPHOSPHATASE-RELATED"/>
    <property type="match status" value="1"/>
</dbReference>
<dbReference type="PANTHER" id="PTHR11556:SF35">
    <property type="entry name" value="SEDOHEPTULOSE-1,7-BISPHOSPHATASE, CHLOROPLASTIC"/>
    <property type="match status" value="1"/>
</dbReference>
<dbReference type="Pfam" id="PF00316">
    <property type="entry name" value="FBPase"/>
    <property type="match status" value="1"/>
</dbReference>
<dbReference type="Pfam" id="PF18913">
    <property type="entry name" value="FBPase_C"/>
    <property type="match status" value="1"/>
</dbReference>
<dbReference type="PIRSF" id="PIRSF500210">
    <property type="entry name" value="FBPtase"/>
    <property type="match status" value="1"/>
</dbReference>
<dbReference type="PIRSF" id="PIRSF000904">
    <property type="entry name" value="FBPtase_SBPase"/>
    <property type="match status" value="1"/>
</dbReference>
<dbReference type="PRINTS" id="PR00115">
    <property type="entry name" value="F16BPHPHTASE"/>
</dbReference>
<dbReference type="SUPFAM" id="SSF56655">
    <property type="entry name" value="Carbohydrate phosphatase"/>
    <property type="match status" value="1"/>
</dbReference>
<dbReference type="PROSITE" id="PS00124">
    <property type="entry name" value="FBPASE"/>
    <property type="match status" value="1"/>
</dbReference>
<feature type="chain" id="PRO_0000364478" description="Fructose-1,6-bisphosphatase class 1">
    <location>
        <begin position="1"/>
        <end position="340"/>
    </location>
</feature>
<feature type="binding site" evidence="1">
    <location>
        <position position="107"/>
    </location>
    <ligand>
        <name>Mg(2+)</name>
        <dbReference type="ChEBI" id="CHEBI:18420"/>
        <label>1</label>
    </ligand>
</feature>
<feature type="binding site" evidence="1">
    <location>
        <position position="126"/>
    </location>
    <ligand>
        <name>Mg(2+)</name>
        <dbReference type="ChEBI" id="CHEBI:18420"/>
        <label>1</label>
    </ligand>
</feature>
<feature type="binding site" evidence="1">
    <location>
        <position position="126"/>
    </location>
    <ligand>
        <name>Mg(2+)</name>
        <dbReference type="ChEBI" id="CHEBI:18420"/>
        <label>2</label>
    </ligand>
</feature>
<feature type="binding site" evidence="1">
    <location>
        <position position="128"/>
    </location>
    <ligand>
        <name>Mg(2+)</name>
        <dbReference type="ChEBI" id="CHEBI:18420"/>
        <label>1</label>
    </ligand>
</feature>
<feature type="binding site" evidence="1">
    <location>
        <position position="129"/>
    </location>
    <ligand>
        <name>Mg(2+)</name>
        <dbReference type="ChEBI" id="CHEBI:18420"/>
        <label>2</label>
    </ligand>
</feature>
<feature type="binding site" evidence="1">
    <location>
        <position position="215"/>
    </location>
    <ligand>
        <name>substrate</name>
    </ligand>
</feature>
<feature type="binding site" evidence="1">
    <location>
        <position position="287"/>
    </location>
    <ligand>
        <name>Mg(2+)</name>
        <dbReference type="ChEBI" id="CHEBI:18420"/>
        <label>2</label>
    </ligand>
</feature>
<protein>
    <recommendedName>
        <fullName evidence="1">Fructose-1,6-bisphosphatase class 1</fullName>
        <shortName evidence="1">FBPase class 1</shortName>
        <ecNumber evidence="1">3.1.3.11</ecNumber>
    </recommendedName>
    <alternativeName>
        <fullName evidence="1">D-fructose-1,6-bisphosphate 1-phosphohydrolase class 1</fullName>
    </alternativeName>
</protein>
<comment type="catalytic activity">
    <reaction evidence="1">
        <text>beta-D-fructose 1,6-bisphosphate + H2O = beta-D-fructose 6-phosphate + phosphate</text>
        <dbReference type="Rhea" id="RHEA:11064"/>
        <dbReference type="ChEBI" id="CHEBI:15377"/>
        <dbReference type="ChEBI" id="CHEBI:32966"/>
        <dbReference type="ChEBI" id="CHEBI:43474"/>
        <dbReference type="ChEBI" id="CHEBI:57634"/>
        <dbReference type="EC" id="3.1.3.11"/>
    </reaction>
</comment>
<comment type="cofactor">
    <cofactor evidence="1">
        <name>Mg(2+)</name>
        <dbReference type="ChEBI" id="CHEBI:18420"/>
    </cofactor>
    <text evidence="1">Binds 2 magnesium ions per subunit.</text>
</comment>
<comment type="pathway">
    <text evidence="1">Carbohydrate biosynthesis; gluconeogenesis.</text>
</comment>
<comment type="subunit">
    <text evidence="1">Homotetramer.</text>
</comment>
<comment type="subcellular location">
    <subcellularLocation>
        <location evidence="1">Cytoplasm</location>
    </subcellularLocation>
</comment>
<comment type="similarity">
    <text evidence="1">Belongs to the FBPase class 1 family.</text>
</comment>
<evidence type="ECO:0000255" key="1">
    <source>
        <dbReference type="HAMAP-Rule" id="MF_01855"/>
    </source>
</evidence>
<sequence>MTLVGNFSPLVLVGDSDRVEAETVGAYLDGWAGHDKVRLATANAIKAILSGAGRLVGRIARGYLPGDPGKLVGVNSDQDQQKSIDVGSHNLFVELLIAAGVASILSEEADLPVAGKADGLVAVAIDPLDGSGNVGLGAPLGTIFSIFPADVEEPFLQPGNRQIAAGYVSYGNSVDLGFSVGEGVIFATLDPVSGQFHITRRNVKLPERTSDLAFNASVQRHLSAGMQAYVNDAFLGKDGPRGRNFNMRWLGAAVGDMHRIMQRGGLFFYVNDSRPGYEKGRLRLVYEANPIAFLAREAGGKATDGSRPILDIVPQTYHERSALVFGVAEEVDILGEYFVK</sequence>
<reference key="1">
    <citation type="journal article" date="2008" name="PLoS ONE">
        <title>Genome sequence of Brucella abortus vaccine strain S19 compared to virulent strains yields candidate virulence genes.</title>
        <authorList>
            <person name="Crasta O.R."/>
            <person name="Folkerts O."/>
            <person name="Fei Z."/>
            <person name="Mane S.P."/>
            <person name="Evans C."/>
            <person name="Martino-Catt S."/>
            <person name="Bricker B."/>
            <person name="Yu G."/>
            <person name="Du L."/>
            <person name="Sobral B.W."/>
        </authorList>
    </citation>
    <scope>NUCLEOTIDE SEQUENCE [LARGE SCALE GENOMIC DNA]</scope>
    <source>
        <strain>S19</strain>
    </source>
</reference>
<accession>B2SAG4</accession>
<keyword id="KW-0119">Carbohydrate metabolism</keyword>
<keyword id="KW-0963">Cytoplasm</keyword>
<keyword id="KW-0378">Hydrolase</keyword>
<keyword id="KW-0460">Magnesium</keyword>
<keyword id="KW-0479">Metal-binding</keyword>